<proteinExistence type="evidence at protein level"/>
<keyword id="KW-0002">3D-structure</keyword>
<keyword id="KW-0051">Antiviral defense</keyword>
<protein>
    <recommendedName>
        <fullName evidence="3">CD-NTase-associated protein 7</fullName>
        <shortName evidence="3">Cap7</shortName>
    </recommendedName>
    <alternativeName>
        <fullName evidence="2">Bacterial HORMA sensor protein</fullName>
    </alternativeName>
</protein>
<dbReference type="EMBL" id="ADTL01000141">
    <property type="protein sequence ID" value="EFJ98157.1"/>
    <property type="status" value="ALT_INIT"/>
    <property type="molecule type" value="Genomic_DNA"/>
</dbReference>
<dbReference type="RefSeq" id="WP_000100572.1">
    <property type="nucleotide sequence ID" value="NZ_GG771785.1"/>
</dbReference>
<dbReference type="PDB" id="6P8V">
    <property type="method" value="X-ray"/>
    <property type="resolution" value="2.64 A"/>
    <property type="chains" value="H=2-172"/>
</dbReference>
<dbReference type="PDB" id="6U7B">
    <property type="method" value="X-ray"/>
    <property type="resolution" value="2.09 A"/>
    <property type="chains" value="B/D=13-172"/>
</dbReference>
<dbReference type="PDBsum" id="6P8V"/>
<dbReference type="PDBsum" id="6U7B"/>
<dbReference type="SMR" id="D7Y2H3"/>
<dbReference type="HOGENOM" id="CLU_1561678_0_0_6"/>
<dbReference type="GO" id="GO:0051607">
    <property type="term" value="P:defense response to virus"/>
    <property type="evidence" value="ECO:0007669"/>
    <property type="project" value="UniProtKB-KW"/>
</dbReference>
<dbReference type="InterPro" id="IPR041162">
    <property type="entry name" value="Bact_HORMA_1"/>
</dbReference>
<dbReference type="Pfam" id="PF18138">
    <property type="entry name" value="bacHORMA_1"/>
    <property type="match status" value="1"/>
</dbReference>
<sequence>MSSYSYTVAETQTFSVTHARHMAAKVATDLRRMQRFYGYPSDADIEAYEEELVVFLKAGYLGEVSYGFQKNNNWIEPTLRYTAGDLLGSGTDDDPGKIRPGKDVSGASFYSFMTYSSKYLNATQSEKDTALKDLPFKRVGAQSPGINGYLENDKTYSAGGRSLTRTSVRNFV</sequence>
<feature type="chain" id="PRO_0000451840" description="CD-NTase-associated protein 7">
    <location>
        <begin position="1"/>
        <end position="172"/>
    </location>
</feature>
<feature type="region of interest" description="Required for binding to CdnC and to confer phage immunity" evidence="1">
    <location>
        <begin position="141"/>
        <end position="172"/>
    </location>
</feature>
<feature type="mutagenesis site" description="Fully active in second messenger formation. Cap7:CdnC complex is no longer disassembled by Cap6." evidence="1">
    <location>
        <begin position="1"/>
        <end position="12"/>
    </location>
</feature>
<feature type="mutagenesis site" description="No longer binds to CdnC. No longer confers phage immunity." evidence="1">
    <original>RMQR</original>
    <variation>AMQA</variation>
    <location>
        <begin position="32"/>
        <end position="35"/>
    </location>
</feature>
<feature type="mutagenesis site" description="Binds to CdnC." evidence="1">
    <original>R</original>
    <variation>A</variation>
    <location>
        <position position="32"/>
    </location>
</feature>
<feature type="mutagenesis site" description="Binds to CdnC." evidence="1">
    <original>R</original>
    <variation>A</variation>
    <location>
        <position position="35"/>
    </location>
</feature>
<feature type="helix" evidence="9">
    <location>
        <begin position="16"/>
        <end position="37"/>
    </location>
</feature>
<feature type="helix" evidence="9">
    <location>
        <begin position="42"/>
        <end position="58"/>
    </location>
</feature>
<feature type="strand" evidence="9">
    <location>
        <begin position="61"/>
        <end position="70"/>
    </location>
</feature>
<feature type="strand" evidence="9">
    <location>
        <begin position="73"/>
        <end position="85"/>
    </location>
</feature>
<feature type="strand" evidence="9">
    <location>
        <begin position="108"/>
        <end position="115"/>
    </location>
</feature>
<feature type="helix" evidence="9">
    <location>
        <begin position="117"/>
        <end position="121"/>
    </location>
</feature>
<feature type="helix" evidence="9">
    <location>
        <begin position="124"/>
        <end position="130"/>
    </location>
</feature>
<feature type="turn" evidence="9">
    <location>
        <begin position="131"/>
        <end position="133"/>
    </location>
</feature>
<feature type="strand" evidence="9">
    <location>
        <begin position="139"/>
        <end position="141"/>
    </location>
</feature>
<feature type="strand" evidence="9">
    <location>
        <begin position="145"/>
        <end position="158"/>
    </location>
</feature>
<feature type="strand" evidence="9">
    <location>
        <begin position="161"/>
        <end position="169"/>
    </location>
</feature>
<reference key="1">
    <citation type="submission" date="2010-05" db="EMBL/GenBank/DDBJ databases">
        <authorList>
            <person name="Weinstock G."/>
            <person name="Sodergren E."/>
            <person name="Clifton S."/>
            <person name="Fulton L."/>
            <person name="Fulton B."/>
            <person name="Courtney L."/>
            <person name="Fronick C."/>
            <person name="Harrison M."/>
            <person name="Strong C."/>
            <person name="Farmer C."/>
            <person name="Delahaunty K."/>
            <person name="Markovic C."/>
            <person name="Hall O."/>
            <person name="Minx P."/>
            <person name="Tomlinson C."/>
            <person name="Mitreva M."/>
            <person name="Hou S."/>
            <person name="Chen J."/>
            <person name="Wollam A."/>
            <person name="Pepin K.H."/>
            <person name="Johnson M."/>
            <person name="Bhonagiri V."/>
            <person name="Zhang X."/>
            <person name="Suruliraj S."/>
            <person name="Warren W."/>
            <person name="Chinwalla A."/>
            <person name="Mardis E.R."/>
            <person name="Wilson R.K."/>
        </authorList>
    </citation>
    <scope>NUCLEOTIDE SEQUENCE [LARGE SCALE GENOMIC DNA]</scope>
    <source>
        <strain>MS 115-1</strain>
    </source>
</reference>
<reference key="2">
    <citation type="journal article" date="2020" name="Nat. Microbiol.">
        <title>Diversity and classification of cyclic-oligonucleotide-based anti-phage signalling systems.</title>
        <authorList>
            <person name="Millman A."/>
            <person name="Melamed S."/>
            <person name="Amitai G."/>
            <person name="Sorek R."/>
        </authorList>
    </citation>
    <scope>CLASSIFICATION AND NOMENCLATURE</scope>
</reference>
<reference evidence="7 8" key="3">
    <citation type="journal article" date="2020" name="Mol. Cell">
        <title>HORMA Domain Proteins and a Trip13-like ATPase Regulate Bacterial cGAS-like Enzymes to Mediate Bacteriophage Immunity.</title>
        <authorList>
            <person name="Ye Q."/>
            <person name="Lau R.K."/>
            <person name="Mathews I.T."/>
            <person name="Birkholz E.A."/>
            <person name="Watrous J.D."/>
            <person name="Azimi C.S."/>
            <person name="Pogliano J."/>
            <person name="Jain M."/>
            <person name="Corbett K.D."/>
        </authorList>
    </citation>
    <scope>X-RAY CRYSTALLOGRAPHY (2.09 ANGSTROMS) OF 13-172 IN COMPLEX WITH CDNC AND WITH CLOSURE PEPTIDE</scope>
    <scope>X-RAY CRYSTALLOGRAPHY (2.64 ANGSTROMS) OF 2-172 IN COMPLEX WITH CDNC AND CAP6</scope>
    <scope>FUNCTION</scope>
    <scope>INTERACTION WITH CDNC</scope>
    <scope>SUBUNIT</scope>
    <scope>DOMAIN</scope>
    <scope>MUTAGENESIS OF 1-MET--GLN-12; 32-ARG--ARG-35; ARG-32 AND ARG-35</scope>
    <source>
        <strain>MS 115-1</strain>
    </source>
</reference>
<comment type="function">
    <text evidence="1 3">Sensor protein of a CBASS antivirus system (PubMed:31932165). CBASS (cyclic oligonucleotide-based antiphage signaling system) provides immunity against bacteriophage. The CD-NTase protein synthesizes cyclic nucleotides in response to infection; these serve as specific second messenger signals. The signals activate a diverse range of effectors, leading to bacterial cell death and thus abortive phage infection. A type III-C(AAA) CBASS system (PubMed:32839535).</text>
</comment>
<comment type="function">
    <text evidence="1">Binds to a closure peptide (consensus His-Xaa-Xaa-Ile-Leu-Leu-Thr), which allows it to activate CdnC for second messenger synthesis (PubMed:31932165).</text>
</comment>
<comment type="function">
    <text evidence="1">Protects E.coli strain JP313 against bacteriophage lambda cI- infection. When the cdnC-cap7-cap6-nucC operon is transformed into a susceptible strain it confers bacteriophage immunity. Mutations in the sensor (Cap7 also called HORMA) or effector proteins (CdnC, NucC) but not the disassembly protein (Cap6 also called Trip13) no longer confer immunity. The presence of the intact operon leads to culture collapse and cell death, which occurs before the phage has finished its replication cycle, thus protecting non-infected bacteria by aborting the phage infection and preventing its propagation.</text>
</comment>
<comment type="subunit">
    <text evidence="1">Forms complexes with CdnC with 1:1 and 2:2 stoichimetry, and a 1:1:6 CdnC:Cap7:Cap6 complex.</text>
</comment>
<comment type="domain">
    <text evidence="1">In the disassembly complex (PDB:6P8V) Cap6 (also called Trip13) crystallizes as a right-handed spiral; the top 4 subunits bind ATP while the bottom 2 do not. A CdnC monomer lies along the surface of the hexamer at the interface of subunits 5 and 6, with Cap7 (this protein) at its tip, over the central hexamer pore. The N-terminus of Cap7 extends into the pore, contacting 5/6 Cap6 subunits.</text>
</comment>
<comment type="similarity">
    <text evidence="5">Belongs to the bacterial HORMA family. HORMA1 subfamily.</text>
</comment>
<comment type="sequence caution" evidence="4">
    <conflict type="erroneous initiation">
        <sequence resource="EMBL-CDS" id="EFJ98157"/>
    </conflict>
    <text>Truncated N-terminus.</text>
</comment>
<name>CAP7_ECOM1</name>
<accession>D7Y2H3</accession>
<organism>
    <name type="scientific">Escherichia coli (strain MS 115-1)</name>
    <dbReference type="NCBI Taxonomy" id="749537"/>
    <lineage>
        <taxon>Bacteria</taxon>
        <taxon>Pseudomonadati</taxon>
        <taxon>Pseudomonadota</taxon>
        <taxon>Gammaproteobacteria</taxon>
        <taxon>Enterobacterales</taxon>
        <taxon>Enterobacteriaceae</taxon>
        <taxon>Escherichia</taxon>
    </lineage>
</organism>
<gene>
    <name evidence="3" type="primary">cap7</name>
    <name evidence="2" type="synonym">HORMA1</name>
    <name evidence="6" type="ORF">HMPREF9540_01759</name>
</gene>
<evidence type="ECO:0000269" key="1">
    <source>
    </source>
</evidence>
<evidence type="ECO:0000303" key="2">
    <source>
    </source>
</evidence>
<evidence type="ECO:0000303" key="3">
    <source>
    </source>
</evidence>
<evidence type="ECO:0000305" key="4"/>
<evidence type="ECO:0000305" key="5">
    <source>
    </source>
</evidence>
<evidence type="ECO:0000312" key="6">
    <source>
        <dbReference type="EMBL" id="EFJ98157.1"/>
    </source>
</evidence>
<evidence type="ECO:0007744" key="7">
    <source>
        <dbReference type="PDB" id="6P8V"/>
    </source>
</evidence>
<evidence type="ECO:0007744" key="8">
    <source>
        <dbReference type="PDB" id="6U7B"/>
    </source>
</evidence>
<evidence type="ECO:0007829" key="9">
    <source>
        <dbReference type="PDB" id="6U7B"/>
    </source>
</evidence>